<keyword id="KW-0175">Coiled coil</keyword>
<keyword id="KW-1185">Reference proteome</keyword>
<accession>Q9ZQX8</accession>
<sequence>MEIAAKSNSKRMYSWWWDSHNTPKNSKWLQDNLADMDSNVKQMIKVLEEDADSFARRAEMYYRKRPELMKLVEEFYRAYRALAERYNHATGVIHKAHETIAEAFPNQVPLIFGDESHGGALTNDVDPQTPDMPPPFRARGNPDEFQQDALGFSLSHVHDVKRNIDFSEEPLFVSNGKARKGLNFNDHGDGKGRNGLKDHILSESERASKAEAEVVALKDSLSKMQAEKQASLALFEKNLERLSNLESEVSRAQADSRGINDRAASAEAEIQTLRETLYKLESEKESSFLQYHKCLQKIADLEDGLSVAHKEAGERASKAETETLALKRSLAKAETDKETALIQYRQCLNTISNLEERLRKAEEDARLINERAEKAGVEVENLKQTVSKLIKDKEASELQFQQCLNIIASLKVKLHHAQEETQSLSHEIEDGVAKLKFSEEKCLLLERSNQNLHSELDSLLEKLGNQSQKLTEKQTELVKLWSCVQAEHLHFQEAETAFQTLQQLHSQSQEELNNLAVELQTVSQIMKDMEMRNNELHEELEQAKVENKGLNDLNFTMEKLVQKNLMLEKSISYLNSELESFRRKLKTFEEACQSLSEEKSCLISENQHNVIENTVLIEWLRQLRLEAVGIATEKTDLEGKAKTIGDKLTDAETENLQLKRNLLSIRSEKHHLEDEITNVKDQLHEKEKEFEEIKMEKEKLIQEVFKERKQVELWESQAATFFCDKQISVVHETLIEATTRELAEACKNLESKSASRDADIEKLKRSQTIVLLNESIKSLEDYVFTHRESAGEVSKGADLMDEFLKLEGMCLRIKAIAEAIMEKEKFLMLENTNTYSMLEASLKQIKELKTGGGRSMRKQDGGSGRMRKQSHETEMVMKDIVLDQTSDGSSYEIVSKKGNSELDHLGFVELKPVKTHKTETKALSEESLIVEKVEIFDGFMDPNREVNKRRVLERLDSDLQKLENLQITVEDLKSKVETVEKEKTKVGENEYKTIKGQLEEGEEAIEKLFTVNRKLTTKAESEKDIDRRRRIFEHARRGTEKIGRLQSEIQRIQFLLMKLEGEREHRLRSKISDTKVLLRDYIYGRTRSVSMKKRTKKRSVFCGCVQQPESP</sequence>
<proteinExistence type="inferred from homology"/>
<feature type="chain" id="PRO_0000431851" description="Protein NETWORKED 1C">
    <location>
        <begin position="1"/>
        <end position="1111"/>
    </location>
</feature>
<feature type="domain" description="NAB" evidence="2">
    <location>
        <begin position="13"/>
        <end position="93"/>
    </location>
</feature>
<feature type="region of interest" description="Disordered" evidence="3">
    <location>
        <begin position="850"/>
        <end position="870"/>
    </location>
</feature>
<feature type="coiled-coil region" evidence="1">
    <location>
        <begin position="202"/>
        <end position="287"/>
    </location>
</feature>
<feature type="coiled-coil region" evidence="1">
    <location>
        <begin position="314"/>
        <end position="605"/>
    </location>
</feature>
<feature type="coiled-coil region" evidence="1">
    <location>
        <begin position="642"/>
        <end position="752"/>
    </location>
</feature>
<feature type="coiled-coil region" evidence="1">
    <location>
        <begin position="943"/>
        <end position="1009"/>
    </location>
</feature>
<reference key="1">
    <citation type="journal article" date="1999" name="Nature">
        <title>Sequence and analysis of chromosome 4 of the plant Arabidopsis thaliana.</title>
        <authorList>
            <person name="Mayer K.F.X."/>
            <person name="Schueller C."/>
            <person name="Wambutt R."/>
            <person name="Murphy G."/>
            <person name="Volckaert G."/>
            <person name="Pohl T."/>
            <person name="Duesterhoeft A."/>
            <person name="Stiekema W."/>
            <person name="Entian K.-D."/>
            <person name="Terryn N."/>
            <person name="Harris B."/>
            <person name="Ansorge W."/>
            <person name="Brandt P."/>
            <person name="Grivell L.A."/>
            <person name="Rieger M."/>
            <person name="Weichselgartner M."/>
            <person name="de Simone V."/>
            <person name="Obermaier B."/>
            <person name="Mache R."/>
            <person name="Mueller M."/>
            <person name="Kreis M."/>
            <person name="Delseny M."/>
            <person name="Puigdomenech P."/>
            <person name="Watson M."/>
            <person name="Schmidtheini T."/>
            <person name="Reichert B."/>
            <person name="Portetelle D."/>
            <person name="Perez-Alonso M."/>
            <person name="Boutry M."/>
            <person name="Bancroft I."/>
            <person name="Vos P."/>
            <person name="Hoheisel J."/>
            <person name="Zimmermann W."/>
            <person name="Wedler H."/>
            <person name="Ridley P."/>
            <person name="Langham S.-A."/>
            <person name="McCullagh B."/>
            <person name="Bilham L."/>
            <person name="Robben J."/>
            <person name="van der Schueren J."/>
            <person name="Grymonprez B."/>
            <person name="Chuang Y.-J."/>
            <person name="Vandenbussche F."/>
            <person name="Braeken M."/>
            <person name="Weltjens I."/>
            <person name="Voet M."/>
            <person name="Bastiaens I."/>
            <person name="Aert R."/>
            <person name="Defoor E."/>
            <person name="Weitzenegger T."/>
            <person name="Bothe G."/>
            <person name="Ramsperger U."/>
            <person name="Hilbert H."/>
            <person name="Braun M."/>
            <person name="Holzer E."/>
            <person name="Brandt A."/>
            <person name="Peters S."/>
            <person name="van Staveren M."/>
            <person name="Dirkse W."/>
            <person name="Mooijman P."/>
            <person name="Klein Lankhorst R."/>
            <person name="Rose M."/>
            <person name="Hauf J."/>
            <person name="Koetter P."/>
            <person name="Berneiser S."/>
            <person name="Hempel S."/>
            <person name="Feldpausch M."/>
            <person name="Lamberth S."/>
            <person name="Van den Daele H."/>
            <person name="De Keyser A."/>
            <person name="Buysshaert C."/>
            <person name="Gielen J."/>
            <person name="Villarroel R."/>
            <person name="De Clercq R."/>
            <person name="van Montagu M."/>
            <person name="Rogers J."/>
            <person name="Cronin A."/>
            <person name="Quail M.A."/>
            <person name="Bray-Allen S."/>
            <person name="Clark L."/>
            <person name="Doggett J."/>
            <person name="Hall S."/>
            <person name="Kay M."/>
            <person name="Lennard N."/>
            <person name="McLay K."/>
            <person name="Mayes R."/>
            <person name="Pettett A."/>
            <person name="Rajandream M.A."/>
            <person name="Lyne M."/>
            <person name="Benes V."/>
            <person name="Rechmann S."/>
            <person name="Borkova D."/>
            <person name="Bloecker H."/>
            <person name="Scharfe M."/>
            <person name="Grimm M."/>
            <person name="Loehnert T.-H."/>
            <person name="Dose S."/>
            <person name="de Haan M."/>
            <person name="Maarse A.C."/>
            <person name="Schaefer M."/>
            <person name="Mueller-Auer S."/>
            <person name="Gabel C."/>
            <person name="Fuchs M."/>
            <person name="Fartmann B."/>
            <person name="Granderath K."/>
            <person name="Dauner D."/>
            <person name="Herzl A."/>
            <person name="Neumann S."/>
            <person name="Argiriou A."/>
            <person name="Vitale D."/>
            <person name="Liguori R."/>
            <person name="Piravandi E."/>
            <person name="Massenet O."/>
            <person name="Quigley F."/>
            <person name="Clabauld G."/>
            <person name="Muendlein A."/>
            <person name="Felber R."/>
            <person name="Schnabl S."/>
            <person name="Hiller R."/>
            <person name="Schmidt W."/>
            <person name="Lecharny A."/>
            <person name="Aubourg S."/>
            <person name="Chefdor F."/>
            <person name="Cooke R."/>
            <person name="Berger C."/>
            <person name="Monfort A."/>
            <person name="Casacuberta E."/>
            <person name="Gibbons T."/>
            <person name="Weber N."/>
            <person name="Vandenbol M."/>
            <person name="Bargues M."/>
            <person name="Terol J."/>
            <person name="Torres A."/>
            <person name="Perez-Perez A."/>
            <person name="Purnelle B."/>
            <person name="Bent E."/>
            <person name="Johnson S."/>
            <person name="Tacon D."/>
            <person name="Jesse T."/>
            <person name="Heijnen L."/>
            <person name="Schwarz S."/>
            <person name="Scholler P."/>
            <person name="Heber S."/>
            <person name="Francs P."/>
            <person name="Bielke C."/>
            <person name="Frishman D."/>
            <person name="Haase D."/>
            <person name="Lemcke K."/>
            <person name="Mewes H.-W."/>
            <person name="Stocker S."/>
            <person name="Zaccaria P."/>
            <person name="Bevan M."/>
            <person name="Wilson R.K."/>
            <person name="de la Bastide M."/>
            <person name="Habermann K."/>
            <person name="Parnell L."/>
            <person name="Dedhia N."/>
            <person name="Gnoj L."/>
            <person name="Schutz K."/>
            <person name="Huang E."/>
            <person name="Spiegel L."/>
            <person name="Sekhon M."/>
            <person name="Murray J."/>
            <person name="Sheet P."/>
            <person name="Cordes M."/>
            <person name="Abu-Threideh J."/>
            <person name="Stoneking T."/>
            <person name="Kalicki J."/>
            <person name="Graves T."/>
            <person name="Harmon G."/>
            <person name="Edwards J."/>
            <person name="Latreille P."/>
            <person name="Courtney L."/>
            <person name="Cloud J."/>
            <person name="Abbott A."/>
            <person name="Scott K."/>
            <person name="Johnson D."/>
            <person name="Minx P."/>
            <person name="Bentley D."/>
            <person name="Fulton B."/>
            <person name="Miller N."/>
            <person name="Greco T."/>
            <person name="Kemp K."/>
            <person name="Kramer J."/>
            <person name="Fulton L."/>
            <person name="Mardis E."/>
            <person name="Dante M."/>
            <person name="Pepin K."/>
            <person name="Hillier L.W."/>
            <person name="Nelson J."/>
            <person name="Spieth J."/>
            <person name="Ryan E."/>
            <person name="Andrews S."/>
            <person name="Geisel C."/>
            <person name="Layman D."/>
            <person name="Du H."/>
            <person name="Ali J."/>
            <person name="Berghoff A."/>
            <person name="Jones K."/>
            <person name="Drone K."/>
            <person name="Cotton M."/>
            <person name="Joshu C."/>
            <person name="Antonoiu B."/>
            <person name="Zidanic M."/>
            <person name="Strong C."/>
            <person name="Sun H."/>
            <person name="Lamar B."/>
            <person name="Yordan C."/>
            <person name="Ma P."/>
            <person name="Zhong J."/>
            <person name="Preston R."/>
            <person name="Vil D."/>
            <person name="Shekher M."/>
            <person name="Matero A."/>
            <person name="Shah R."/>
            <person name="Swaby I.K."/>
            <person name="O'Shaughnessy A."/>
            <person name="Rodriguez M."/>
            <person name="Hoffman J."/>
            <person name="Till S."/>
            <person name="Granat S."/>
            <person name="Shohdy N."/>
            <person name="Hasegawa A."/>
            <person name="Hameed A."/>
            <person name="Lodhi M."/>
            <person name="Johnson A."/>
            <person name="Chen E."/>
            <person name="Marra M.A."/>
            <person name="Martienssen R."/>
            <person name="McCombie W.R."/>
        </authorList>
    </citation>
    <scope>NUCLEOTIDE SEQUENCE [LARGE SCALE GENOMIC DNA]</scope>
    <source>
        <strain>cv. Columbia</strain>
    </source>
</reference>
<reference key="2">
    <citation type="journal article" date="2017" name="Plant J.">
        <title>Araport11: a complete reannotation of the Arabidopsis thaliana reference genome.</title>
        <authorList>
            <person name="Cheng C.Y."/>
            <person name="Krishnakumar V."/>
            <person name="Chan A.P."/>
            <person name="Thibaud-Nissen F."/>
            <person name="Schobel S."/>
            <person name="Town C.D."/>
        </authorList>
    </citation>
    <scope>GENOME REANNOTATION</scope>
    <source>
        <strain>cv. Columbia</strain>
    </source>
</reference>
<reference key="3">
    <citation type="journal article" date="2012" name="Curr. Biol.">
        <title>A superfamily of actin-binding proteins at the actin-membrane nexus of higher plants.</title>
        <authorList>
            <person name="Deeks M.J."/>
            <person name="Calcutt J.R."/>
            <person name="Ingle E.K."/>
            <person name="Hawkins T.J."/>
            <person name="Chapman S."/>
            <person name="Richardson A.C."/>
            <person name="Mentlak D.A."/>
            <person name="Dixon M.R."/>
            <person name="Cartwright F."/>
            <person name="Smertenko A.P."/>
            <person name="Oparka K."/>
            <person name="Hussey P.J."/>
        </authorList>
    </citation>
    <scope>GENE FAMILY</scope>
    <scope>NOMENCLATURE</scope>
</reference>
<reference key="4">
    <citation type="journal article" date="2014" name="Front. Plant Sci.">
        <title>The evolution of the actin binding NET superfamily.</title>
        <authorList>
            <person name="Hawkins T.J."/>
            <person name="Deeks M.J."/>
            <person name="Wang P."/>
            <person name="Hussey P.J."/>
        </authorList>
    </citation>
    <scope>GENE FAMILY</scope>
</reference>
<name>NET1C_ARATH</name>
<gene>
    <name evidence="4" type="primary">NET1C</name>
    <name evidence="7" type="ordered locus">At4g02710</name>
    <name evidence="8" type="ORF">T10P11.22</name>
</gene>
<dbReference type="EMBL" id="AC002330">
    <property type="protein sequence ID" value="AAC78272.1"/>
    <property type="molecule type" value="Genomic_DNA"/>
</dbReference>
<dbReference type="EMBL" id="AL161495">
    <property type="protein sequence ID" value="CAB77756.1"/>
    <property type="molecule type" value="Genomic_DNA"/>
</dbReference>
<dbReference type="EMBL" id="CP002687">
    <property type="protein sequence ID" value="AEE82216.1"/>
    <property type="molecule type" value="Genomic_DNA"/>
</dbReference>
<dbReference type="PIR" id="T01078">
    <property type="entry name" value="T01078"/>
</dbReference>
<dbReference type="RefSeq" id="NP_192180.1">
    <property type="nucleotide sequence ID" value="NM_116505.2"/>
</dbReference>
<dbReference type="SMR" id="Q9ZQX8"/>
<dbReference type="FunCoup" id="Q9ZQX8">
    <property type="interactions" value="1201"/>
</dbReference>
<dbReference type="STRING" id="3702.Q9ZQX8"/>
<dbReference type="iPTMnet" id="Q9ZQX8"/>
<dbReference type="PaxDb" id="3702-AT4G02710.1"/>
<dbReference type="ProteomicsDB" id="251057"/>
<dbReference type="EnsemblPlants" id="AT4G02710.1">
    <property type="protein sequence ID" value="AT4G02710.1"/>
    <property type="gene ID" value="AT4G02710"/>
</dbReference>
<dbReference type="GeneID" id="828199"/>
<dbReference type="Gramene" id="AT4G02710.1">
    <property type="protein sequence ID" value="AT4G02710.1"/>
    <property type="gene ID" value="AT4G02710"/>
</dbReference>
<dbReference type="KEGG" id="ath:AT4G02710"/>
<dbReference type="Araport" id="AT4G02710"/>
<dbReference type="TAIR" id="AT4G02710">
    <property type="gene designation" value="NET1C"/>
</dbReference>
<dbReference type="eggNOG" id="ENOG502QQ6M">
    <property type="taxonomic scope" value="Eukaryota"/>
</dbReference>
<dbReference type="HOGENOM" id="CLU_001229_1_1_1"/>
<dbReference type="InParanoid" id="Q9ZQX8"/>
<dbReference type="OMA" id="FFCDKQI"/>
<dbReference type="PhylomeDB" id="Q9ZQX8"/>
<dbReference type="PRO" id="PR:Q9ZQX8"/>
<dbReference type="Proteomes" id="UP000006548">
    <property type="component" value="Chromosome 4"/>
</dbReference>
<dbReference type="ExpressionAtlas" id="Q9ZQX8">
    <property type="expression patterns" value="baseline and differential"/>
</dbReference>
<dbReference type="GO" id="GO:0005886">
    <property type="term" value="C:plasma membrane"/>
    <property type="evidence" value="ECO:0007005"/>
    <property type="project" value="TAIR"/>
</dbReference>
<dbReference type="GO" id="GO:0003779">
    <property type="term" value="F:actin binding"/>
    <property type="evidence" value="ECO:0007669"/>
    <property type="project" value="InterPro"/>
</dbReference>
<dbReference type="InterPro" id="IPR011684">
    <property type="entry name" value="NAB"/>
</dbReference>
<dbReference type="InterPro" id="IPR051861">
    <property type="entry name" value="NET_actin-binding_domain"/>
</dbReference>
<dbReference type="PANTHER" id="PTHR32258:SF32">
    <property type="entry name" value="PROTEIN NETWORKED 1D"/>
    <property type="match status" value="1"/>
</dbReference>
<dbReference type="PANTHER" id="PTHR32258">
    <property type="entry name" value="PROTEIN NETWORKED 4A"/>
    <property type="match status" value="1"/>
</dbReference>
<dbReference type="Pfam" id="PF07765">
    <property type="entry name" value="KIP1"/>
    <property type="match status" value="1"/>
</dbReference>
<dbReference type="SUPFAM" id="SSF57997">
    <property type="entry name" value="Tropomyosin"/>
    <property type="match status" value="1"/>
</dbReference>
<dbReference type="PROSITE" id="PS51774">
    <property type="entry name" value="NAB"/>
    <property type="match status" value="1"/>
</dbReference>
<comment type="function">
    <text evidence="6">Plant-specific actin binding protein. May be part of a membrane-cytoskeletal adapter complex.</text>
</comment>
<comment type="similarity">
    <text evidence="5">Belongs to the NET family.</text>
</comment>
<evidence type="ECO:0000255" key="1"/>
<evidence type="ECO:0000255" key="2">
    <source>
        <dbReference type="PROSITE-ProRule" id="PRU01110"/>
    </source>
</evidence>
<evidence type="ECO:0000256" key="3">
    <source>
        <dbReference type="SAM" id="MobiDB-lite"/>
    </source>
</evidence>
<evidence type="ECO:0000303" key="4">
    <source>
    </source>
</evidence>
<evidence type="ECO:0000305" key="5"/>
<evidence type="ECO:0000305" key="6">
    <source>
    </source>
</evidence>
<evidence type="ECO:0000312" key="7">
    <source>
        <dbReference type="Araport" id="AT4G02710"/>
    </source>
</evidence>
<evidence type="ECO:0000312" key="8">
    <source>
        <dbReference type="EMBL" id="AAC78272.1"/>
    </source>
</evidence>
<evidence type="ECO:0000312" key="9">
    <source>
        <dbReference type="Proteomes" id="UP000006548"/>
    </source>
</evidence>
<organism evidence="9">
    <name type="scientific">Arabidopsis thaliana</name>
    <name type="common">Mouse-ear cress</name>
    <dbReference type="NCBI Taxonomy" id="3702"/>
    <lineage>
        <taxon>Eukaryota</taxon>
        <taxon>Viridiplantae</taxon>
        <taxon>Streptophyta</taxon>
        <taxon>Embryophyta</taxon>
        <taxon>Tracheophyta</taxon>
        <taxon>Spermatophyta</taxon>
        <taxon>Magnoliopsida</taxon>
        <taxon>eudicotyledons</taxon>
        <taxon>Gunneridae</taxon>
        <taxon>Pentapetalae</taxon>
        <taxon>rosids</taxon>
        <taxon>malvids</taxon>
        <taxon>Brassicales</taxon>
        <taxon>Brassicaceae</taxon>
        <taxon>Camelineae</taxon>
        <taxon>Arabidopsis</taxon>
    </lineage>
</organism>
<protein>
    <recommendedName>
        <fullName evidence="4">Protein NETWORKED 1C</fullName>
    </recommendedName>
</protein>